<protein>
    <recommendedName>
        <fullName evidence="1">Probable DNA-directed RNA polymerase subunit delta</fullName>
    </recommendedName>
    <alternativeName>
        <fullName evidence="1">RNAP delta factor</fullName>
    </alternativeName>
</protein>
<organism>
    <name type="scientific">Staphylococcus aureus (strain Newman)</name>
    <dbReference type="NCBI Taxonomy" id="426430"/>
    <lineage>
        <taxon>Bacteria</taxon>
        <taxon>Bacillati</taxon>
        <taxon>Bacillota</taxon>
        <taxon>Bacilli</taxon>
        <taxon>Bacillales</taxon>
        <taxon>Staphylococcaceae</taxon>
        <taxon>Staphylococcus</taxon>
    </lineage>
</organism>
<keyword id="KW-0240">DNA-directed RNA polymerase</keyword>
<keyword id="KW-0548">Nucleotidyltransferase</keyword>
<keyword id="KW-0804">Transcription</keyword>
<keyword id="KW-0808">Transferase</keyword>
<accession>A6QIX2</accession>
<sequence>MKIQDYTKQMVDEKSFIDMAYTLLNDKGETMNLYDIIDEFRALGDYEYEEIENRVVQFYTDLNTDGRFLNVGENLWGLRDWYSVDDIEEKIAPTIQKFDILDADDEEDQNLKLLGEDEMDDDDDIPAQTDDQEELNDPEDEQVEEEINHSDIVIEEDEDELDEDEEVFEDEEDFND</sequence>
<feature type="chain" id="PRO_1000072073" description="Probable DNA-directed RNA polymerase subunit delta">
    <location>
        <begin position="1"/>
        <end position="176"/>
    </location>
</feature>
<feature type="domain" description="HTH HARE-type" evidence="2">
    <location>
        <begin position="14"/>
        <end position="81"/>
    </location>
</feature>
<feature type="region of interest" description="Disordered" evidence="3">
    <location>
        <begin position="114"/>
        <end position="176"/>
    </location>
</feature>
<feature type="compositionally biased region" description="Acidic residues" evidence="3">
    <location>
        <begin position="116"/>
        <end position="145"/>
    </location>
</feature>
<feature type="compositionally biased region" description="Acidic residues" evidence="3">
    <location>
        <begin position="153"/>
        <end position="176"/>
    </location>
</feature>
<dbReference type="EMBL" id="AP009351">
    <property type="protein sequence ID" value="BAF68304.1"/>
    <property type="molecule type" value="Genomic_DNA"/>
</dbReference>
<dbReference type="RefSeq" id="WP_000701483.1">
    <property type="nucleotide sequence ID" value="NZ_JBBIAE010000008.1"/>
</dbReference>
<dbReference type="SMR" id="A6QIX2"/>
<dbReference type="GeneID" id="98346435"/>
<dbReference type="KEGG" id="sae:NWMN_2032"/>
<dbReference type="HOGENOM" id="CLU_116648_1_0_9"/>
<dbReference type="Proteomes" id="UP000006386">
    <property type="component" value="Chromosome"/>
</dbReference>
<dbReference type="GO" id="GO:0000428">
    <property type="term" value="C:DNA-directed RNA polymerase complex"/>
    <property type="evidence" value="ECO:0007669"/>
    <property type="project" value="UniProtKB-KW"/>
</dbReference>
<dbReference type="GO" id="GO:0003899">
    <property type="term" value="F:DNA-directed RNA polymerase activity"/>
    <property type="evidence" value="ECO:0007669"/>
    <property type="project" value="UniProtKB-UniRule"/>
</dbReference>
<dbReference type="GO" id="GO:0006351">
    <property type="term" value="P:DNA-templated transcription"/>
    <property type="evidence" value="ECO:0007669"/>
    <property type="project" value="InterPro"/>
</dbReference>
<dbReference type="GO" id="GO:0006355">
    <property type="term" value="P:regulation of DNA-templated transcription"/>
    <property type="evidence" value="ECO:0007669"/>
    <property type="project" value="UniProtKB-UniRule"/>
</dbReference>
<dbReference type="Gene3D" id="1.10.10.1250">
    <property type="entry name" value="RNA polymerase, subunit delta, N-terminal domain"/>
    <property type="match status" value="1"/>
</dbReference>
<dbReference type="HAMAP" id="MF_00357">
    <property type="entry name" value="RNApol_bact_RpoE"/>
    <property type="match status" value="1"/>
</dbReference>
<dbReference type="InterPro" id="IPR007759">
    <property type="entry name" value="Asxl_HARE-HTH"/>
</dbReference>
<dbReference type="InterPro" id="IPR038087">
    <property type="entry name" value="RNAP_delta_N_dom_sf"/>
</dbReference>
<dbReference type="InterPro" id="IPR029757">
    <property type="entry name" value="RpoE"/>
</dbReference>
<dbReference type="NCBIfam" id="TIGR04567">
    <property type="entry name" value="RNAP_delt_lowGC"/>
    <property type="match status" value="1"/>
</dbReference>
<dbReference type="Pfam" id="PF05066">
    <property type="entry name" value="HARE-HTH"/>
    <property type="match status" value="1"/>
</dbReference>
<dbReference type="PROSITE" id="PS51913">
    <property type="entry name" value="HTH_HARE"/>
    <property type="match status" value="1"/>
</dbReference>
<reference key="1">
    <citation type="journal article" date="2008" name="J. Bacteriol.">
        <title>Genome sequence of Staphylococcus aureus strain Newman and comparative analysis of staphylococcal genomes: polymorphism and evolution of two major pathogenicity islands.</title>
        <authorList>
            <person name="Baba T."/>
            <person name="Bae T."/>
            <person name="Schneewind O."/>
            <person name="Takeuchi F."/>
            <person name="Hiramatsu K."/>
        </authorList>
    </citation>
    <scope>NUCLEOTIDE SEQUENCE [LARGE SCALE GENOMIC DNA]</scope>
    <source>
        <strain>Newman</strain>
    </source>
</reference>
<proteinExistence type="inferred from homology"/>
<name>RPOE_STAAE</name>
<comment type="function">
    <text evidence="1">Participates in both the initiation and recycling phases of transcription. In the presence of the delta subunit, RNAP displays an increased specificity of transcription, a decreased affinity for nucleic acids, and an increased efficiency of RNA synthesis because of enhanced recycling.</text>
</comment>
<comment type="subunit">
    <text evidence="1">RNAP is composed of a core of 2 alpha, a beta and a beta' subunits. The core is associated with a delta subunit and one of several sigma factors.</text>
</comment>
<comment type="similarity">
    <text evidence="1">Belongs to the RpoE family.</text>
</comment>
<gene>
    <name evidence="1" type="primary">rpoE</name>
    <name type="ordered locus">NWMN_2032</name>
</gene>
<evidence type="ECO:0000255" key="1">
    <source>
        <dbReference type="HAMAP-Rule" id="MF_00357"/>
    </source>
</evidence>
<evidence type="ECO:0000255" key="2">
    <source>
        <dbReference type="PROSITE-ProRule" id="PRU01261"/>
    </source>
</evidence>
<evidence type="ECO:0000256" key="3">
    <source>
        <dbReference type="SAM" id="MobiDB-lite"/>
    </source>
</evidence>